<name>RCAN3_HUMAN</name>
<gene>
    <name type="primary">RCAN3</name>
    <name type="synonym">DSCR1L2</name>
</gene>
<feature type="chain" id="PRO_0000211420" description="Calcipressin-3">
    <location>
        <begin position="1"/>
        <end position="241"/>
    </location>
</feature>
<feature type="region of interest" description="Disordered" evidence="2">
    <location>
        <begin position="1"/>
        <end position="23"/>
    </location>
</feature>
<feature type="region of interest" description="Calcineurin-binding" evidence="3">
    <location>
        <begin position="183"/>
        <end position="203"/>
    </location>
</feature>
<feature type="region of interest" description="Disordered" evidence="2">
    <location>
        <begin position="202"/>
        <end position="241"/>
    </location>
</feature>
<feature type="compositionally biased region" description="Polar residues" evidence="2">
    <location>
        <begin position="7"/>
        <end position="19"/>
    </location>
</feature>
<feature type="splice variant" id="VSP_054855" description="In isoform 6." evidence="7">
    <location>
        <begin position="1"/>
        <end position="125"/>
    </location>
</feature>
<feature type="splice variant" id="VSP_047510" description="In isoform 5." evidence="6 7">
    <location>
        <begin position="66"/>
        <end position="123"/>
    </location>
</feature>
<feature type="splice variant" id="VSP_045968" description="In isoform 4." evidence="5">
    <original>FEALFTIYDDQVTFQLFKSFRRVRINFSKPEAAARARIELHETDFNGQ</original>
    <variation>NMNFTREQSRHPAWWFMSVKVKLKRKKRQKTPNRKLPRRGAPTLRPQR</variation>
    <location>
        <begin position="68"/>
        <end position="115"/>
    </location>
</feature>
<feature type="splice variant" id="VSP_045969" description="In isoform 4." evidence="5">
    <location>
        <begin position="116"/>
        <end position="241"/>
    </location>
</feature>
<feature type="splice variant" id="VSP_045970" description="In isoform 3." evidence="5">
    <original>VQMSGEVRDKSYLLPPQPVKQFLISPPASPPVGWKQSEDAMPVINYDLLC</original>
    <variation>ERNMNFTREQSRHPAWWFMSVKVKLKRKKRQKTPNRKLPRRGAPTLRPQR</variation>
    <location>
        <begin position="124"/>
        <end position="173"/>
    </location>
</feature>
<feature type="splice variant" id="VSP_001319" description="In isoform 2." evidence="4">
    <location>
        <begin position="124"/>
        <end position="133"/>
    </location>
</feature>
<feature type="splice variant" id="VSP_045971" description="In isoform 3." evidence="5">
    <location>
        <begin position="174"/>
        <end position="241"/>
    </location>
</feature>
<feature type="sequence variant" id="VAR_033727" description="In dbSNP:rs16829813.">
    <original>T</original>
    <variation>N</variation>
    <location>
        <position position="236"/>
    </location>
</feature>
<feature type="sequence conflict" description="In Ref. 2; ABO46010." evidence="8" ref="2">
    <original>R</original>
    <variation>Q</variation>
    <location sequence="Q9UKA8-3">
        <position position="164"/>
    </location>
</feature>
<feature type="sequence conflict" description="In Ref. 2; AAW83514." evidence="8" ref="2">
    <original>R</original>
    <variation>Q</variation>
    <location sequence="Q9UKA8-4">
        <position position="106"/>
    </location>
</feature>
<protein>
    <recommendedName>
        <fullName>Calcipressin-3</fullName>
    </recommendedName>
    <alternativeName>
        <fullName>Down syndrome candidate region 1-like protein 2</fullName>
    </alternativeName>
    <alternativeName>
        <fullName>Myocyte-enriched calcineurin-interacting protein 3</fullName>
        <shortName>MCIP3</shortName>
    </alternativeName>
    <alternativeName>
        <fullName>Regulator of calcineurin 3</fullName>
    </alternativeName>
</protein>
<reference key="1">
    <citation type="journal article" date="2000" name="Genomics">
        <title>A new gene family including DSCR1 (Down syndrome candidate region 1) and ZAKI-4: characterization from yeast to human and identification of DSCR1-like 2, a novel human member (DSCR1L2).</title>
        <authorList>
            <person name="Strippoli P."/>
            <person name="Lenzi L."/>
            <person name="Petrini M."/>
            <person name="Carinci P."/>
            <person name="Zannotti M."/>
        </authorList>
    </citation>
    <scope>NUCLEOTIDE SEQUENCE [MRNA] (ISOFORMS 1 AND 2)</scope>
    <source>
        <tissue>Peripheral blood</tissue>
        <tissue>Placenta</tissue>
    </source>
</reference>
<reference key="2">
    <citation type="journal article" date="2006" name="Gene">
        <title>Proteins encoded by human Down syndrome critical region gene 1-like 2 (DSCR1L2) mRNA and by a novel DSCR1L2 mRNA isoform interact with cardiac troponin I (TNNI3).</title>
        <authorList>
            <person name="Canaider S."/>
            <person name="Facchin F."/>
            <person name="Griffoni C."/>
            <person name="Casadei R."/>
            <person name="Vitale L."/>
            <person name="Lenzi L."/>
            <person name="Frabetti F."/>
            <person name="D'Addabbo P."/>
            <person name="Carinci P."/>
            <person name="Zannotti M."/>
            <person name="Strippoli P."/>
        </authorList>
    </citation>
    <scope>NUCLEOTIDE SEQUENCE [MRNA] (ISOFORMS 3 AND 4)</scope>
    <source>
        <tissue>Heart</tissue>
    </source>
</reference>
<reference key="3">
    <citation type="journal article" date="2008" name="Gene">
        <title>Identification and analysis of human RCAN3 (DSCR1L2) mRNA and protein isoforms.</title>
        <authorList>
            <person name="Facchin F."/>
            <person name="Canaider S."/>
            <person name="Vitale L."/>
            <person name="Frabetti F."/>
            <person name="Griffoni C."/>
            <person name="Lenzi L."/>
            <person name="Casadei R."/>
            <person name="Strippoli P."/>
        </authorList>
    </citation>
    <scope>NUCLEOTIDE SEQUENCE [MRNA] (ISOFORM 5)</scope>
    <scope>ALTERNATIVE SPLICING</scope>
    <source>
        <tissue>Skeletal muscle</tissue>
    </source>
</reference>
<reference key="4">
    <citation type="journal article" date="2011" name="PLoS ONE">
        <title>Complexity of bidirectional transcription and alternative splicing at human RCAN3 locus.</title>
        <authorList>
            <person name="Facchin F."/>
            <person name="Vitale L."/>
            <person name="Bianconi E."/>
            <person name="Piva F."/>
            <person name="Frabetti F."/>
            <person name="Strippoli P."/>
            <person name="Casadei R."/>
            <person name="Pelleri M.C."/>
            <person name="Piovesan A."/>
            <person name="Canaider S."/>
        </authorList>
    </citation>
    <scope>NUCLEOTIDE SEQUENCE [MRNA] (ISOFORMS 1; 5 AND 6)</scope>
    <scope>ALTERNATIVE SPLICING</scope>
    <source>
        <tissue>Lung</tissue>
        <tissue>Prostate</tissue>
        <tissue>Testis</tissue>
    </source>
</reference>
<reference key="5">
    <citation type="journal article" date="2006" name="Nature">
        <title>The DNA sequence and biological annotation of human chromosome 1.</title>
        <authorList>
            <person name="Gregory S.G."/>
            <person name="Barlow K.F."/>
            <person name="McLay K.E."/>
            <person name="Kaul R."/>
            <person name="Swarbreck D."/>
            <person name="Dunham A."/>
            <person name="Scott C.E."/>
            <person name="Howe K.L."/>
            <person name="Woodfine K."/>
            <person name="Spencer C.C.A."/>
            <person name="Jones M.C."/>
            <person name="Gillson C."/>
            <person name="Searle S."/>
            <person name="Zhou Y."/>
            <person name="Kokocinski F."/>
            <person name="McDonald L."/>
            <person name="Evans R."/>
            <person name="Phillips K."/>
            <person name="Atkinson A."/>
            <person name="Cooper R."/>
            <person name="Jones C."/>
            <person name="Hall R.E."/>
            <person name="Andrews T.D."/>
            <person name="Lloyd C."/>
            <person name="Ainscough R."/>
            <person name="Almeida J.P."/>
            <person name="Ambrose K.D."/>
            <person name="Anderson F."/>
            <person name="Andrew R.W."/>
            <person name="Ashwell R.I.S."/>
            <person name="Aubin K."/>
            <person name="Babbage A.K."/>
            <person name="Bagguley C.L."/>
            <person name="Bailey J."/>
            <person name="Beasley H."/>
            <person name="Bethel G."/>
            <person name="Bird C.P."/>
            <person name="Bray-Allen S."/>
            <person name="Brown J.Y."/>
            <person name="Brown A.J."/>
            <person name="Buckley D."/>
            <person name="Burton J."/>
            <person name="Bye J."/>
            <person name="Carder C."/>
            <person name="Chapman J.C."/>
            <person name="Clark S.Y."/>
            <person name="Clarke G."/>
            <person name="Clee C."/>
            <person name="Cobley V."/>
            <person name="Collier R.E."/>
            <person name="Corby N."/>
            <person name="Coville G.J."/>
            <person name="Davies J."/>
            <person name="Deadman R."/>
            <person name="Dunn M."/>
            <person name="Earthrowl M."/>
            <person name="Ellington A.G."/>
            <person name="Errington H."/>
            <person name="Frankish A."/>
            <person name="Frankland J."/>
            <person name="French L."/>
            <person name="Garner P."/>
            <person name="Garnett J."/>
            <person name="Gay L."/>
            <person name="Ghori M.R.J."/>
            <person name="Gibson R."/>
            <person name="Gilby L.M."/>
            <person name="Gillett W."/>
            <person name="Glithero R.J."/>
            <person name="Grafham D.V."/>
            <person name="Griffiths C."/>
            <person name="Griffiths-Jones S."/>
            <person name="Grocock R."/>
            <person name="Hammond S."/>
            <person name="Harrison E.S.I."/>
            <person name="Hart E."/>
            <person name="Haugen E."/>
            <person name="Heath P.D."/>
            <person name="Holmes S."/>
            <person name="Holt K."/>
            <person name="Howden P.J."/>
            <person name="Hunt A.R."/>
            <person name="Hunt S.E."/>
            <person name="Hunter G."/>
            <person name="Isherwood J."/>
            <person name="James R."/>
            <person name="Johnson C."/>
            <person name="Johnson D."/>
            <person name="Joy A."/>
            <person name="Kay M."/>
            <person name="Kershaw J.K."/>
            <person name="Kibukawa M."/>
            <person name="Kimberley A.M."/>
            <person name="King A."/>
            <person name="Knights A.J."/>
            <person name="Lad H."/>
            <person name="Laird G."/>
            <person name="Lawlor S."/>
            <person name="Leongamornlert D.A."/>
            <person name="Lloyd D.M."/>
            <person name="Loveland J."/>
            <person name="Lovell J."/>
            <person name="Lush M.J."/>
            <person name="Lyne R."/>
            <person name="Martin S."/>
            <person name="Mashreghi-Mohammadi M."/>
            <person name="Matthews L."/>
            <person name="Matthews N.S.W."/>
            <person name="McLaren S."/>
            <person name="Milne S."/>
            <person name="Mistry S."/>
            <person name="Moore M.J.F."/>
            <person name="Nickerson T."/>
            <person name="O'Dell C.N."/>
            <person name="Oliver K."/>
            <person name="Palmeiri A."/>
            <person name="Palmer S.A."/>
            <person name="Parker A."/>
            <person name="Patel D."/>
            <person name="Pearce A.V."/>
            <person name="Peck A.I."/>
            <person name="Pelan S."/>
            <person name="Phelps K."/>
            <person name="Phillimore B.J."/>
            <person name="Plumb R."/>
            <person name="Rajan J."/>
            <person name="Raymond C."/>
            <person name="Rouse G."/>
            <person name="Saenphimmachak C."/>
            <person name="Sehra H.K."/>
            <person name="Sheridan E."/>
            <person name="Shownkeen R."/>
            <person name="Sims S."/>
            <person name="Skuce C.D."/>
            <person name="Smith M."/>
            <person name="Steward C."/>
            <person name="Subramanian S."/>
            <person name="Sycamore N."/>
            <person name="Tracey A."/>
            <person name="Tromans A."/>
            <person name="Van Helmond Z."/>
            <person name="Wall M."/>
            <person name="Wallis J.M."/>
            <person name="White S."/>
            <person name="Whitehead S.L."/>
            <person name="Wilkinson J.E."/>
            <person name="Willey D.L."/>
            <person name="Williams H."/>
            <person name="Wilming L."/>
            <person name="Wray P.W."/>
            <person name="Wu Z."/>
            <person name="Coulson A."/>
            <person name="Vaudin M."/>
            <person name="Sulston J.E."/>
            <person name="Durbin R.M."/>
            <person name="Hubbard T."/>
            <person name="Wooster R."/>
            <person name="Dunham I."/>
            <person name="Carter N.P."/>
            <person name="McVean G."/>
            <person name="Ross M.T."/>
            <person name="Harrow J."/>
            <person name="Olson M.V."/>
            <person name="Beck S."/>
            <person name="Rogers J."/>
            <person name="Bentley D.R."/>
        </authorList>
    </citation>
    <scope>NUCLEOTIDE SEQUENCE [LARGE SCALE GENOMIC DNA]</scope>
</reference>
<reference key="6">
    <citation type="submission" date="2005-07" db="EMBL/GenBank/DDBJ databases">
        <authorList>
            <person name="Mural R.J."/>
            <person name="Istrail S."/>
            <person name="Sutton G."/>
            <person name="Florea L."/>
            <person name="Halpern A.L."/>
            <person name="Mobarry C.M."/>
            <person name="Lippert R."/>
            <person name="Walenz B."/>
            <person name="Shatkay H."/>
            <person name="Dew I."/>
            <person name="Miller J.R."/>
            <person name="Flanigan M.J."/>
            <person name="Edwards N.J."/>
            <person name="Bolanos R."/>
            <person name="Fasulo D."/>
            <person name="Halldorsson B.V."/>
            <person name="Hannenhalli S."/>
            <person name="Turner R."/>
            <person name="Yooseph S."/>
            <person name="Lu F."/>
            <person name="Nusskern D.R."/>
            <person name="Shue B.C."/>
            <person name="Zheng X.H."/>
            <person name="Zhong F."/>
            <person name="Delcher A.L."/>
            <person name="Huson D.H."/>
            <person name="Kravitz S.A."/>
            <person name="Mouchard L."/>
            <person name="Reinert K."/>
            <person name="Remington K.A."/>
            <person name="Clark A.G."/>
            <person name="Waterman M.S."/>
            <person name="Eichler E.E."/>
            <person name="Adams M.D."/>
            <person name="Hunkapiller M.W."/>
            <person name="Myers E.W."/>
            <person name="Venter J.C."/>
        </authorList>
    </citation>
    <scope>NUCLEOTIDE SEQUENCE [LARGE SCALE GENOMIC DNA]</scope>
</reference>
<reference key="7">
    <citation type="journal article" date="2004" name="Genome Res.">
        <title>The status, quality, and expansion of the NIH full-length cDNA project: the Mammalian Gene Collection (MGC).</title>
        <authorList>
            <consortium name="The MGC Project Team"/>
        </authorList>
    </citation>
    <scope>NUCLEOTIDE SEQUENCE [LARGE SCALE MRNA] (ISOFORM 1)</scope>
    <source>
        <tissue>Brain</tissue>
    </source>
</reference>
<reference key="8">
    <citation type="journal article" date="2015" name="PLoS ONE">
        <title>Calcineurin Undergoes a Conformational Switch Evoked via Peptidyl-Prolyl Isomerization.</title>
        <authorList>
            <person name="Guasch A."/>
            <person name="Aranguren-Ibanez A."/>
            <person name="Perez-Luque R."/>
            <person name="Aparicio D."/>
            <person name="Martinez-Hoyer S."/>
            <person name="Mulero M.C."/>
            <person name="Serrano-Candelas E."/>
            <person name="Perez-Riba M."/>
            <person name="Fita I."/>
        </authorList>
    </citation>
    <scope>INTERACTION WITH PPP3CA</scope>
</reference>
<keyword id="KW-0025">Alternative splicing</keyword>
<keyword id="KW-1267">Proteomics identification</keyword>
<keyword id="KW-1185">Reference proteome</keyword>
<organism>
    <name type="scientific">Homo sapiens</name>
    <name type="common">Human</name>
    <dbReference type="NCBI Taxonomy" id="9606"/>
    <lineage>
        <taxon>Eukaryota</taxon>
        <taxon>Metazoa</taxon>
        <taxon>Chordata</taxon>
        <taxon>Craniata</taxon>
        <taxon>Vertebrata</taxon>
        <taxon>Euteleostomi</taxon>
        <taxon>Mammalia</taxon>
        <taxon>Eutheria</taxon>
        <taxon>Euarchontoglires</taxon>
        <taxon>Primates</taxon>
        <taxon>Haplorrhini</taxon>
        <taxon>Catarrhini</taxon>
        <taxon>Hominidae</taxon>
        <taxon>Homo</taxon>
    </lineage>
</organism>
<comment type="function">
    <text evidence="1">Inhibits calcineurin-dependent transcriptional responses by binding to the catalytic domain of calcineurin A. Could play a role during central nervous system development (By similarity).</text>
</comment>
<comment type="subunit">
    <text evidence="3">Interacts with protein phosphatase PPP3CA/calcineurin A.</text>
</comment>
<comment type="interaction">
    <interactant intactId="EBI-9091952">
        <id>Q9UKA8</id>
    </interactant>
    <interactant intactId="EBI-80275">
        <id>Q13322</id>
        <label>GRB10</label>
    </interactant>
    <organismsDiffer>false</organismsDiffer>
    <experiments>3</experiments>
</comment>
<comment type="interaction">
    <interactant intactId="EBI-9091952">
        <id>Q9UKA8</id>
    </interactant>
    <interactant intactId="EBI-466029">
        <id>P42858</id>
        <label>HTT</label>
    </interactant>
    <organismsDiffer>false</organismsDiffer>
    <experiments>18</experiments>
</comment>
<comment type="interaction">
    <interactant intactId="EBI-9091952">
        <id>Q9UKA8</id>
    </interactant>
    <interactant intactId="EBI-740098">
        <id>P36406</id>
        <label>TRIM23</label>
    </interactant>
    <organismsDiffer>false</organismsDiffer>
    <experiments>3</experiments>
</comment>
<comment type="interaction">
    <interactant intactId="EBI-9091952">
        <id>Q9UKA8</id>
    </interactant>
    <interactant intactId="EBI-711260">
        <id>Q13432</id>
        <label>UNC119</label>
    </interactant>
    <organismsDiffer>false</organismsDiffer>
    <experiments>3</experiments>
</comment>
<comment type="interaction">
    <interactant intactId="EBI-9091952">
        <id>Q9UKA8</id>
    </interactant>
    <interactant intactId="EBI-25475797">
        <id>PRO_0000037309</id>
        <label>rep</label>
        <dbReference type="UniProtKB" id="P0C6X7"/>
    </interactant>
    <organismsDiffer>true</organismsDiffer>
    <experiments>2</experiments>
</comment>
<comment type="interaction">
    <interactant intactId="EBI-10762111">
        <id>Q9UKA8-1</id>
    </interactant>
    <interactant intactId="EBI-704146">
        <id>P19429</id>
        <label>TNNI3</label>
    </interactant>
    <organismsDiffer>false</organismsDiffer>
    <experiments>3</experiments>
</comment>
<comment type="interaction">
    <interactant intactId="EBI-10762136">
        <id>Q9UKA8-4</id>
    </interactant>
    <interactant intactId="EBI-704146">
        <id>P19429</id>
        <label>TNNI3</label>
    </interactant>
    <organismsDiffer>false</organismsDiffer>
    <experiments>2</experiments>
</comment>
<comment type="alternative products">
    <event type="alternative splicing"/>
    <isoform>
        <id>Q9UKA8-1</id>
        <name>1</name>
        <name>RCAN3-1a,2,3,4,5</name>
        <sequence type="displayed"/>
    </isoform>
    <isoform>
        <id>Q9UKA8-2</id>
        <name>2</name>
        <sequence type="described" ref="VSP_001319"/>
    </isoform>
    <isoform>
        <id>Q9UKA8-3</id>
        <name>3</name>
        <sequence type="described" ref="VSP_045970 VSP_045971"/>
    </isoform>
    <isoform>
        <id>Q9UKA8-4</id>
        <name>4</name>
        <sequence type="described" ref="VSP_045968 VSP_045969"/>
    </isoform>
    <isoform>
        <id>Q9UKA8-5</id>
        <name>5</name>
        <name>RCAN3-2,4,5</name>
        <name>RCAN3-1c,2,4,5</name>
        <sequence type="described" ref="VSP_047510"/>
    </isoform>
    <isoform>
        <id>Q9UKA8-6</id>
        <name>6</name>
        <name>RCAN3-1,3,4,5</name>
        <name>RCAN3-1a,3,4,5</name>
        <name>RCAN3-1c,3,4,5</name>
        <sequence type="described" ref="VSP_054855"/>
    </isoform>
</comment>
<comment type="tissue specificity">
    <text>Highest expression in heart, skeletal muscle kidney, liver and peripheral blood leukocytes. Lower expression in all other tissues.</text>
</comment>
<comment type="similarity">
    <text evidence="8">Belongs to the RCAN family.</text>
</comment>
<evidence type="ECO:0000250" key="1"/>
<evidence type="ECO:0000256" key="2">
    <source>
        <dbReference type="SAM" id="MobiDB-lite"/>
    </source>
</evidence>
<evidence type="ECO:0000269" key="3">
    <source>
    </source>
</evidence>
<evidence type="ECO:0000303" key="4">
    <source>
    </source>
</evidence>
<evidence type="ECO:0000303" key="5">
    <source>
    </source>
</evidence>
<evidence type="ECO:0000303" key="6">
    <source>
    </source>
</evidence>
<evidence type="ECO:0000303" key="7">
    <source>
    </source>
</evidence>
<evidence type="ECO:0000305" key="8"/>
<dbReference type="EMBL" id="AF176116">
    <property type="protein sequence ID" value="AAF01684.1"/>
    <property type="molecule type" value="mRNA"/>
</dbReference>
<dbReference type="EMBL" id="AF176117">
    <property type="protein sequence ID" value="AAF01685.1"/>
    <property type="molecule type" value="mRNA"/>
</dbReference>
<dbReference type="EMBL" id="AY906854">
    <property type="protein sequence ID" value="AAW83514.1"/>
    <property type="molecule type" value="mRNA"/>
</dbReference>
<dbReference type="EMBL" id="EF467309">
    <property type="protein sequence ID" value="ABO46010.1"/>
    <property type="molecule type" value="mRNA"/>
</dbReference>
<dbReference type="EMBL" id="EF431960">
    <property type="protein sequence ID" value="ABO27184.1"/>
    <property type="molecule type" value="mRNA"/>
</dbReference>
<dbReference type="EMBL" id="EF529733">
    <property type="protein sequence ID" value="ABP88933.1"/>
    <property type="molecule type" value="mRNA"/>
</dbReference>
<dbReference type="EMBL" id="JN228252">
    <property type="protein sequence ID" value="AEL88283.1"/>
    <property type="molecule type" value="mRNA"/>
</dbReference>
<dbReference type="EMBL" id="JN203053">
    <property type="protein sequence ID" value="AEL12453.1"/>
    <property type="molecule type" value="mRNA"/>
</dbReference>
<dbReference type="EMBL" id="HQ287726">
    <property type="protein sequence ID" value="ADO15700.1"/>
    <property type="molecule type" value="mRNA"/>
</dbReference>
<dbReference type="EMBL" id="HQ317421">
    <property type="protein sequence ID" value="ADR51177.1"/>
    <property type="molecule type" value="mRNA"/>
</dbReference>
<dbReference type="EMBL" id="HQ317422">
    <property type="protein sequence ID" value="ADR51178.1"/>
    <property type="molecule type" value="mRNA"/>
</dbReference>
<dbReference type="EMBL" id="HQ317423">
    <property type="protein sequence ID" value="ADR51179.1"/>
    <property type="molecule type" value="mRNA"/>
</dbReference>
<dbReference type="EMBL" id="HQ317426">
    <property type="protein sequence ID" value="ADR51182.1"/>
    <property type="molecule type" value="mRNA"/>
</dbReference>
<dbReference type="EMBL" id="HQ317427">
    <property type="protein sequence ID" value="ADR51183.1"/>
    <property type="molecule type" value="mRNA"/>
</dbReference>
<dbReference type="EMBL" id="HQ317445">
    <property type="protein sequence ID" value="ADR02808.1"/>
    <property type="molecule type" value="mRNA"/>
</dbReference>
<dbReference type="EMBL" id="HQ317446">
    <property type="protein sequence ID" value="ADR02809.1"/>
    <property type="molecule type" value="mRNA"/>
</dbReference>
<dbReference type="EMBL" id="AL034582">
    <property type="status" value="NOT_ANNOTATED_CDS"/>
    <property type="molecule type" value="Genomic_DNA"/>
</dbReference>
<dbReference type="EMBL" id="CH471134">
    <property type="protein sequence ID" value="EAW95133.1"/>
    <property type="molecule type" value="Genomic_DNA"/>
</dbReference>
<dbReference type="EMBL" id="BC035854">
    <property type="protein sequence ID" value="AAH35854.1"/>
    <property type="molecule type" value="mRNA"/>
</dbReference>
<dbReference type="CCDS" id="CCDS254.1">
    <molecule id="Q9UKA8-1"/>
</dbReference>
<dbReference type="CCDS" id="CCDS57979.1">
    <molecule id="Q9UKA8-2"/>
</dbReference>
<dbReference type="CCDS" id="CCDS57980.1">
    <molecule id="Q9UKA8-3"/>
</dbReference>
<dbReference type="CCDS" id="CCDS57981.1">
    <molecule id="Q9UKA8-5"/>
</dbReference>
<dbReference type="CCDS" id="CCDS57982.1">
    <molecule id="Q9UKA8-4"/>
</dbReference>
<dbReference type="CCDS" id="CCDS72730.1">
    <molecule id="Q9UKA8-6"/>
</dbReference>
<dbReference type="RefSeq" id="NP_001238906.1">
    <molecule id="Q9UKA8-1"/>
    <property type="nucleotide sequence ID" value="NM_001251977.2"/>
</dbReference>
<dbReference type="RefSeq" id="NP_001238907.1">
    <molecule id="Q9UKA8-1"/>
    <property type="nucleotide sequence ID" value="NM_001251978.1"/>
</dbReference>
<dbReference type="RefSeq" id="NP_001238908.1">
    <molecule id="Q9UKA8-1"/>
    <property type="nucleotide sequence ID" value="NM_001251979.2"/>
</dbReference>
<dbReference type="RefSeq" id="NP_001238909.1">
    <molecule id="Q9UKA8-2"/>
    <property type="nucleotide sequence ID" value="NM_001251980.1"/>
</dbReference>
<dbReference type="RefSeq" id="NP_001238910.1">
    <molecule id="Q9UKA8-5"/>
    <property type="nucleotide sequence ID" value="NM_001251981.2"/>
</dbReference>
<dbReference type="RefSeq" id="NP_001238911.1">
    <molecule id="Q9UKA8-3"/>
    <property type="nucleotide sequence ID" value="NM_001251982.1"/>
</dbReference>
<dbReference type="RefSeq" id="NP_001238912.1">
    <molecule id="Q9UKA8-6"/>
    <property type="nucleotide sequence ID" value="NM_001251983.2"/>
</dbReference>
<dbReference type="RefSeq" id="NP_001238913.1">
    <molecule id="Q9UKA8-6"/>
    <property type="nucleotide sequence ID" value="NM_001251984.2"/>
</dbReference>
<dbReference type="RefSeq" id="NP_001238914.1">
    <molecule id="Q9UKA8-4"/>
    <property type="nucleotide sequence ID" value="NM_001251985.1"/>
</dbReference>
<dbReference type="RefSeq" id="NP_038469.1">
    <molecule id="Q9UKA8-1"/>
    <property type="nucleotide sequence ID" value="NM_013441.4"/>
</dbReference>
<dbReference type="SMR" id="Q9UKA8"/>
<dbReference type="BioGRID" id="116297">
    <property type="interactions" value="20"/>
</dbReference>
<dbReference type="FunCoup" id="Q9UKA8">
    <property type="interactions" value="2084"/>
</dbReference>
<dbReference type="IntAct" id="Q9UKA8">
    <property type="interactions" value="18"/>
</dbReference>
<dbReference type="MINT" id="Q9UKA8"/>
<dbReference type="STRING" id="9606.ENSP00000363516"/>
<dbReference type="GlyGen" id="Q9UKA8">
    <property type="glycosylation" value="2 sites"/>
</dbReference>
<dbReference type="iPTMnet" id="Q9UKA8"/>
<dbReference type="PhosphoSitePlus" id="Q9UKA8"/>
<dbReference type="BioMuta" id="RCAN3"/>
<dbReference type="DMDM" id="15213951"/>
<dbReference type="jPOST" id="Q9UKA8"/>
<dbReference type="MassIVE" id="Q9UKA8"/>
<dbReference type="PaxDb" id="9606-ENSP00000363516"/>
<dbReference type="PeptideAtlas" id="Q9UKA8"/>
<dbReference type="ProteomicsDB" id="17228"/>
<dbReference type="ProteomicsDB" id="18826"/>
<dbReference type="ProteomicsDB" id="676"/>
<dbReference type="ProteomicsDB" id="84752">
    <molecule id="Q9UKA8-1"/>
</dbReference>
<dbReference type="ProteomicsDB" id="84753">
    <molecule id="Q9UKA8-2"/>
</dbReference>
<dbReference type="Pumba" id="Q9UKA8"/>
<dbReference type="Antibodypedia" id="30319">
    <property type="antibodies" value="250 antibodies from 22 providers"/>
</dbReference>
<dbReference type="DNASU" id="11123"/>
<dbReference type="Ensembl" id="ENST00000374393.4">
    <molecule id="Q9UKA8-4"/>
    <property type="protein sequence ID" value="ENSP00000363514.2"/>
    <property type="gene ID" value="ENSG00000117602.13"/>
</dbReference>
<dbReference type="Ensembl" id="ENST00000374395.9">
    <molecule id="Q9UKA8-1"/>
    <property type="protein sequence ID" value="ENSP00000363516.3"/>
    <property type="gene ID" value="ENSG00000117602.13"/>
</dbReference>
<dbReference type="Ensembl" id="ENST00000412742.5">
    <molecule id="Q9UKA8-3"/>
    <property type="protein sequence ID" value="ENSP00000391912.2"/>
    <property type="gene ID" value="ENSG00000117602.13"/>
</dbReference>
<dbReference type="Ensembl" id="ENST00000425530.3">
    <molecule id="Q9UKA8-2"/>
    <property type="protein sequence ID" value="ENSP00000409540.2"/>
    <property type="gene ID" value="ENSG00000117602.13"/>
</dbReference>
<dbReference type="Ensembl" id="ENST00000436717.6">
    <molecule id="Q9UKA8-5"/>
    <property type="protein sequence ID" value="ENSP00000414447.3"/>
    <property type="gene ID" value="ENSG00000117602.13"/>
</dbReference>
<dbReference type="Ensembl" id="ENST00000538532.6">
    <molecule id="Q9UKA8-1"/>
    <property type="protein sequence ID" value="ENSP00000445401.2"/>
    <property type="gene ID" value="ENSG00000117602.13"/>
</dbReference>
<dbReference type="Ensembl" id="ENST00000616511.4">
    <molecule id="Q9UKA8-6"/>
    <property type="protein sequence ID" value="ENSP00000478174.1"/>
    <property type="gene ID" value="ENSG00000117602.13"/>
</dbReference>
<dbReference type="Ensembl" id="ENST00000618490.4">
    <molecule id="Q9UKA8-6"/>
    <property type="protein sequence ID" value="ENSP00000484519.1"/>
    <property type="gene ID" value="ENSG00000117602.13"/>
</dbReference>
<dbReference type="Ensembl" id="ENST00000630217.1">
    <molecule id="Q9UKA8-5"/>
    <property type="protein sequence ID" value="ENSP00000486836.1"/>
    <property type="gene ID" value="ENSG00000117602.13"/>
</dbReference>
<dbReference type="GeneID" id="11123"/>
<dbReference type="KEGG" id="hsa:11123"/>
<dbReference type="MANE-Select" id="ENST00000374395.9">
    <property type="protein sequence ID" value="ENSP00000363516.3"/>
    <property type="RefSeq nucleotide sequence ID" value="NM_013441.4"/>
    <property type="RefSeq protein sequence ID" value="NP_038469.1"/>
</dbReference>
<dbReference type="UCSC" id="uc001bjj.4">
    <molecule id="Q9UKA8-1"/>
    <property type="organism name" value="human"/>
</dbReference>
<dbReference type="AGR" id="HGNC:3042"/>
<dbReference type="CTD" id="11123"/>
<dbReference type="DisGeNET" id="11123"/>
<dbReference type="GeneCards" id="RCAN3"/>
<dbReference type="HGNC" id="HGNC:3042">
    <property type="gene designation" value="RCAN3"/>
</dbReference>
<dbReference type="HPA" id="ENSG00000117602">
    <property type="expression patterns" value="Tissue enhanced (prostate)"/>
</dbReference>
<dbReference type="MIM" id="605860">
    <property type="type" value="gene"/>
</dbReference>
<dbReference type="neXtProt" id="NX_Q9UKA8"/>
<dbReference type="OpenTargets" id="ENSG00000117602"/>
<dbReference type="PharmGKB" id="PA162400972"/>
<dbReference type="VEuPathDB" id="HostDB:ENSG00000117602"/>
<dbReference type="eggNOG" id="KOG4019">
    <property type="taxonomic scope" value="Eukaryota"/>
</dbReference>
<dbReference type="GeneTree" id="ENSGT00940000159501"/>
<dbReference type="HOGENOM" id="CLU_1577930_0_0_1"/>
<dbReference type="InParanoid" id="Q9UKA8"/>
<dbReference type="OMA" id="DMHRERF"/>
<dbReference type="OrthoDB" id="17212at2759"/>
<dbReference type="PAN-GO" id="Q9UKA8">
    <property type="GO annotations" value="4 GO annotations based on evolutionary models"/>
</dbReference>
<dbReference type="PhylomeDB" id="Q9UKA8"/>
<dbReference type="TreeFam" id="TF313579"/>
<dbReference type="PathwayCommons" id="Q9UKA8"/>
<dbReference type="Reactome" id="R-HSA-9692916">
    <property type="pathway name" value="SARS-CoV-1 activates/modulates innate immune responses"/>
</dbReference>
<dbReference type="SignaLink" id="Q9UKA8"/>
<dbReference type="BioGRID-ORCS" id="11123">
    <property type="hits" value="15 hits in 1150 CRISPR screens"/>
</dbReference>
<dbReference type="ChiTaRS" id="RCAN3">
    <property type="organism name" value="human"/>
</dbReference>
<dbReference type="GeneWiki" id="RCAN3"/>
<dbReference type="GenomeRNAi" id="11123"/>
<dbReference type="Pharos" id="Q9UKA8">
    <property type="development level" value="Tbio"/>
</dbReference>
<dbReference type="PRO" id="PR:Q9UKA8"/>
<dbReference type="Proteomes" id="UP000005640">
    <property type="component" value="Chromosome 1"/>
</dbReference>
<dbReference type="RNAct" id="Q9UKA8">
    <property type="molecule type" value="protein"/>
</dbReference>
<dbReference type="Bgee" id="ENSG00000117602">
    <property type="expression patterns" value="Expressed in bronchial epithelial cell and 183 other cell types or tissues"/>
</dbReference>
<dbReference type="ExpressionAtlas" id="Q9UKA8">
    <property type="expression patterns" value="baseline and differential"/>
</dbReference>
<dbReference type="GO" id="GO:0005737">
    <property type="term" value="C:cytoplasm"/>
    <property type="evidence" value="ECO:0000318"/>
    <property type="project" value="GO_Central"/>
</dbReference>
<dbReference type="GO" id="GO:0005829">
    <property type="term" value="C:cytosol"/>
    <property type="evidence" value="ECO:0000304"/>
    <property type="project" value="Reactome"/>
</dbReference>
<dbReference type="GO" id="GO:0005634">
    <property type="term" value="C:nucleus"/>
    <property type="evidence" value="ECO:0000318"/>
    <property type="project" value="GO_Central"/>
</dbReference>
<dbReference type="GO" id="GO:0008597">
    <property type="term" value="F:calcium-dependent protein serine/threonine phosphatase regulator activity"/>
    <property type="evidence" value="ECO:0000318"/>
    <property type="project" value="GO_Central"/>
</dbReference>
<dbReference type="GO" id="GO:0019902">
    <property type="term" value="F:phosphatase binding"/>
    <property type="evidence" value="ECO:0000353"/>
    <property type="project" value="UniProtKB"/>
</dbReference>
<dbReference type="GO" id="GO:0003723">
    <property type="term" value="F:RNA binding"/>
    <property type="evidence" value="ECO:0000304"/>
    <property type="project" value="ProtInc"/>
</dbReference>
<dbReference type="GO" id="GO:0031013">
    <property type="term" value="F:troponin I binding"/>
    <property type="evidence" value="ECO:0000353"/>
    <property type="project" value="UniProtKB"/>
</dbReference>
<dbReference type="GO" id="GO:0009653">
    <property type="term" value="P:anatomical structure morphogenesis"/>
    <property type="evidence" value="ECO:0000304"/>
    <property type="project" value="ProtInc"/>
</dbReference>
<dbReference type="GO" id="GO:0019722">
    <property type="term" value="P:calcium-mediated signaling"/>
    <property type="evidence" value="ECO:0000318"/>
    <property type="project" value="GO_Central"/>
</dbReference>
<dbReference type="CDD" id="cd12710">
    <property type="entry name" value="RRM_RCAN3"/>
    <property type="match status" value="1"/>
</dbReference>
<dbReference type="FunFam" id="3.30.70.330:FF:000092">
    <property type="entry name" value="Calcipressin-2 isoform 2"/>
    <property type="match status" value="1"/>
</dbReference>
<dbReference type="Gene3D" id="3.30.70.330">
    <property type="match status" value="1"/>
</dbReference>
<dbReference type="InterPro" id="IPR006931">
    <property type="entry name" value="Calcipressin"/>
</dbReference>
<dbReference type="InterPro" id="IPR012677">
    <property type="entry name" value="Nucleotide-bd_a/b_plait_sf"/>
</dbReference>
<dbReference type="InterPro" id="IPR035979">
    <property type="entry name" value="RBD_domain_sf"/>
</dbReference>
<dbReference type="PANTHER" id="PTHR10300">
    <property type="entry name" value="CALCIPRESSIN"/>
    <property type="match status" value="1"/>
</dbReference>
<dbReference type="PANTHER" id="PTHR10300:SF6">
    <property type="entry name" value="CALCIPRESSIN-3"/>
    <property type="match status" value="1"/>
</dbReference>
<dbReference type="Pfam" id="PF04847">
    <property type="entry name" value="Calcipressin"/>
    <property type="match status" value="1"/>
</dbReference>
<dbReference type="SUPFAM" id="SSF54928">
    <property type="entry name" value="RNA-binding domain, RBD"/>
    <property type="match status" value="1"/>
</dbReference>
<accession>Q9UKA8</accession>
<accession>A4GU14</accession>
<accession>A4LA69</accession>
<accession>E3VWE2</accession>
<accession>E5L4P0</accession>
<accession>E5L4P7</accession>
<accession>E7ENV1</accession>
<accession>E7EWD8</accession>
<accession>G1FI66</accession>
<accession>G1FLF0</accession>
<accession>Q5ECL3</accession>
<accession>Q5TGC6</accession>
<accession>Q9NUC8</accession>
<accession>Q9UKA7</accession>
<proteinExistence type="evidence at protein level"/>
<sequence>MLRDTMKSWNDSQSDLCSTDQEEEEEMIFGENEDDLDEMMDLSDLPTSLFACSVHEAVFEAREQKERFEALFTIYDDQVTFQLFKSFRRVRINFSKPEAAARARIELHETDFNGQKLKLYFAQVQMSGEVRDKSYLLPPQPVKQFLISPPASPPVGWKQSEDAMPVINYDLLCAVSKLGPGEKYELHAGTESTPSVVVHVCESETEEEEETKNPKQKIAQTRRPDPPTAALNEPQTFDCAL</sequence>